<accession>Q8R3G9</accession>
<organism>
    <name type="scientific">Mus musculus</name>
    <name type="common">Mouse</name>
    <dbReference type="NCBI Taxonomy" id="10090"/>
    <lineage>
        <taxon>Eukaryota</taxon>
        <taxon>Metazoa</taxon>
        <taxon>Chordata</taxon>
        <taxon>Craniata</taxon>
        <taxon>Vertebrata</taxon>
        <taxon>Euteleostomi</taxon>
        <taxon>Mammalia</taxon>
        <taxon>Eutheria</taxon>
        <taxon>Euarchontoglires</taxon>
        <taxon>Glires</taxon>
        <taxon>Rodentia</taxon>
        <taxon>Myomorpha</taxon>
        <taxon>Muroidea</taxon>
        <taxon>Muridae</taxon>
        <taxon>Murinae</taxon>
        <taxon>Mus</taxon>
        <taxon>Mus</taxon>
    </lineage>
</organism>
<keyword id="KW-1003">Cell membrane</keyword>
<keyword id="KW-0325">Glycoprotein</keyword>
<keyword id="KW-0472">Membrane</keyword>
<keyword id="KW-1185">Reference proteome</keyword>
<keyword id="KW-0812">Transmembrane</keyword>
<keyword id="KW-1133">Transmembrane helix</keyword>
<name>TSN8_MOUSE</name>
<feature type="chain" id="PRO_0000415811" description="Tetraspanin-8">
    <location>
        <begin position="1"/>
        <end position="235"/>
    </location>
</feature>
<feature type="topological domain" description="Cytoplasmic" evidence="2">
    <location>
        <begin position="1"/>
        <end position="12"/>
    </location>
</feature>
<feature type="transmembrane region" description="Helical" evidence="2">
    <location>
        <begin position="13"/>
        <end position="33"/>
    </location>
</feature>
<feature type="topological domain" description="Extracellular" evidence="2">
    <location>
        <begin position="34"/>
        <end position="52"/>
    </location>
</feature>
<feature type="transmembrane region" description="Helical" evidence="2">
    <location>
        <begin position="53"/>
        <end position="73"/>
    </location>
</feature>
<feature type="topological domain" description="Cytoplasmic" evidence="2">
    <location>
        <begin position="74"/>
        <end position="84"/>
    </location>
</feature>
<feature type="transmembrane region" description="Helical" evidence="2">
    <location>
        <begin position="85"/>
        <end position="105"/>
    </location>
</feature>
<feature type="topological domain" description="Extracellular" evidence="2">
    <location>
        <begin position="106"/>
        <end position="203"/>
    </location>
</feature>
<feature type="transmembrane region" description="Helical" evidence="2">
    <location>
        <begin position="204"/>
        <end position="224"/>
    </location>
</feature>
<feature type="topological domain" description="Cytoplasmic" evidence="2">
    <location>
        <begin position="225"/>
        <end position="235"/>
    </location>
</feature>
<feature type="glycosylation site" description="N-linked (GlcNAc...) asparagine" evidence="2">
    <location>
        <position position="118"/>
    </location>
</feature>
<sequence>MAGVSSCLKYSMFFFNFLFWVCGTLILGLAIWVRVSKDGKEIITSGDSSTNPFIAVNILIAVGSIIMVLGFLGCCGAVKESRCMLLLFFIGLLLILILQVAAGILGAAFKPEYNRILNETLYENAKLLSDNTDEAKDFQKAMIVFQSEFKCCGLENGAADWGNNFVEAKESCQCTGTDCATYQGSSVYPKTCLSLIKDLFEKNIIIVIGIAFGLAVIEILGLVFSMVLYCQIGSK</sequence>
<reference key="1">
    <citation type="journal article" date="2009" name="PLoS Biol.">
        <title>Lineage-specific biology revealed by a finished genome assembly of the mouse.</title>
        <authorList>
            <person name="Church D.M."/>
            <person name="Goodstadt L."/>
            <person name="Hillier L.W."/>
            <person name="Zody M.C."/>
            <person name="Goldstein S."/>
            <person name="She X."/>
            <person name="Bult C.J."/>
            <person name="Agarwala R."/>
            <person name="Cherry J.L."/>
            <person name="DiCuccio M."/>
            <person name="Hlavina W."/>
            <person name="Kapustin Y."/>
            <person name="Meric P."/>
            <person name="Maglott D."/>
            <person name="Birtle Z."/>
            <person name="Marques A.C."/>
            <person name="Graves T."/>
            <person name="Zhou S."/>
            <person name="Teague B."/>
            <person name="Potamousis K."/>
            <person name="Churas C."/>
            <person name="Place M."/>
            <person name="Herschleb J."/>
            <person name="Runnheim R."/>
            <person name="Forrest D."/>
            <person name="Amos-Landgraf J."/>
            <person name="Schwartz D.C."/>
            <person name="Cheng Z."/>
            <person name="Lindblad-Toh K."/>
            <person name="Eichler E.E."/>
            <person name="Ponting C.P."/>
        </authorList>
    </citation>
    <scope>NUCLEOTIDE SEQUENCE [LARGE SCALE GENOMIC DNA]</scope>
    <source>
        <strain>C57BL/6J</strain>
    </source>
</reference>
<reference key="2">
    <citation type="submission" date="2005-07" db="EMBL/GenBank/DDBJ databases">
        <authorList>
            <person name="Mural R.J."/>
            <person name="Adams M.D."/>
            <person name="Myers E.W."/>
            <person name="Smith H.O."/>
            <person name="Venter J.C."/>
        </authorList>
    </citation>
    <scope>NUCLEOTIDE SEQUENCE [LARGE SCALE GENOMIC DNA]</scope>
</reference>
<reference key="3">
    <citation type="journal article" date="2004" name="Genome Res.">
        <title>The status, quality, and expansion of the NIH full-length cDNA project: the Mammalian Gene Collection (MGC).</title>
        <authorList>
            <consortium name="The MGC Project Team"/>
        </authorList>
    </citation>
    <scope>NUCLEOTIDE SEQUENCE [LARGE SCALE MRNA]</scope>
    <source>
        <strain>FVB/N</strain>
        <tissue>Colon</tissue>
        <tissue>Mammary tumor</tissue>
    </source>
</reference>
<reference key="4">
    <citation type="journal article" date="2010" name="Cell">
        <title>A tissue-specific atlas of mouse protein phosphorylation and expression.</title>
        <authorList>
            <person name="Huttlin E.L."/>
            <person name="Jedrychowski M.P."/>
            <person name="Elias J.E."/>
            <person name="Goswami T."/>
            <person name="Rad R."/>
            <person name="Beausoleil S.A."/>
            <person name="Villen J."/>
            <person name="Haas W."/>
            <person name="Sowa M.E."/>
            <person name="Gygi S.P."/>
        </authorList>
    </citation>
    <scope>IDENTIFICATION BY MASS SPECTROMETRY [LARGE SCALE ANALYSIS]</scope>
    <source>
        <tissue>Kidney</tissue>
        <tissue>Lung</tissue>
        <tissue>Spleen</tissue>
    </source>
</reference>
<reference key="5">
    <citation type="journal article" date="2011" name="Int. J. Obes. Relat. Metab. Disord.">
        <title>Reduced body weight in male Tspan8-deficient mice.</title>
        <authorList>
            <person name="Champy M.F."/>
            <person name="Le Voci L."/>
            <person name="Selloum M."/>
            <person name="Peterson L.B."/>
            <person name="Cumiskey A.M."/>
            <person name="Blom D."/>
        </authorList>
    </citation>
    <scope>DISRUPTION PHENOTYPE</scope>
</reference>
<comment type="function">
    <text evidence="1">Structural component of specialized membrane microdomains known as tetraspanin-enriched microdomains (TERMs), which act as platforms for receptor clustering and signaling. Participates thereby in diverse biological functions such as cell signal transduction, migration and protein trafficking. Promotes ADAM17-mediated TNF-alpha processing through recruitment of ADAM17 to tetraspanin-enriched micro-domains (TEMs). Forms a complex with RICTOR and integrin alpha3/ITGA3 to mediate mTORC2 activation and AKT1 phosphorylation leading to cell migration. Reduces apoptosis and autophagy induced by high glucose levels through forming a complex with mTOR and RICTOR. Contributes to the maintenance of intestinal epithelial barrier and plays a role in the regulation of intestine inflammation by switching interferon gamma receptor 1/IFNGR1 from clathrin-dependent to lipid raft-dependent endocytosis route to limit STAT1 activation magnitude and duration. Acts as a modulator of the endothelin axis by associating with endothelin converting enzyme ECE1 and regulating its activity of conversion of the endothelin-1 precursor to endothelin.</text>
</comment>
<comment type="subunit">
    <text evidence="1">Forms homooligomers. Interacts with MEP1B. Interacts with integrin alpha3/ITGA3. Interacts with RICTOR and MTOR. Interacts with ADAM17. Interacts with ECE1.</text>
</comment>
<comment type="subcellular location">
    <subcellularLocation>
        <location evidence="1">Cell membrane</location>
        <topology evidence="1">Multi-pass membrane protein</topology>
    </subcellularLocation>
</comment>
<comment type="disruption phenotype">
    <text evidence="3">Tspan8 deficiency results in a lower body weight in male mice fed a normal chow diet, and in a lower gain in body weight upon feeding a high fat high carbohydrate diet. No significant body weight differences could be detected for female knockout mice. In addition to the body weight and bone density phenotypes, male knockout mice also exhibit lower circulating levels of free fatty acids and glycerol.</text>
</comment>
<comment type="similarity">
    <text evidence="4">Belongs to the tetraspanin (TM4SF) family.</text>
</comment>
<evidence type="ECO:0000250" key="1">
    <source>
        <dbReference type="UniProtKB" id="P19075"/>
    </source>
</evidence>
<evidence type="ECO:0000255" key="2"/>
<evidence type="ECO:0000269" key="3">
    <source>
    </source>
</evidence>
<evidence type="ECO:0000305" key="4"/>
<gene>
    <name type="primary">Tspan8</name>
</gene>
<dbReference type="EMBL" id="AC126270">
    <property type="status" value="NOT_ANNOTATED_CDS"/>
    <property type="molecule type" value="Genomic_DNA"/>
</dbReference>
<dbReference type="EMBL" id="AC153364">
    <property type="status" value="NOT_ANNOTATED_CDS"/>
    <property type="molecule type" value="Genomic_DNA"/>
</dbReference>
<dbReference type="EMBL" id="CH466539">
    <property type="protein sequence ID" value="EDL21777.1"/>
    <property type="molecule type" value="Genomic_DNA"/>
</dbReference>
<dbReference type="EMBL" id="CH466539">
    <property type="protein sequence ID" value="EDL21778.1"/>
    <property type="molecule type" value="Genomic_DNA"/>
</dbReference>
<dbReference type="EMBL" id="CH466539">
    <property type="protein sequence ID" value="EDL21779.1"/>
    <property type="molecule type" value="Genomic_DNA"/>
</dbReference>
<dbReference type="EMBL" id="CH466539">
    <property type="protein sequence ID" value="EDL21780.1"/>
    <property type="molecule type" value="Genomic_DNA"/>
</dbReference>
<dbReference type="EMBL" id="BC025461">
    <property type="protein sequence ID" value="AAH25461.1"/>
    <property type="molecule type" value="mRNA"/>
</dbReference>
<dbReference type="EMBL" id="BC027777">
    <property type="protein sequence ID" value="AAH27777.1"/>
    <property type="molecule type" value="mRNA"/>
</dbReference>
<dbReference type="EMBL" id="BC029068">
    <property type="protein sequence ID" value="AAH29068.1"/>
    <property type="molecule type" value="mRNA"/>
</dbReference>
<dbReference type="EMBL" id="BC029808">
    <property type="protein sequence ID" value="AAH29808.1"/>
    <property type="molecule type" value="mRNA"/>
</dbReference>
<dbReference type="EMBL" id="BC034198">
    <property type="protein sequence ID" value="AAH34198.1"/>
    <property type="molecule type" value="mRNA"/>
</dbReference>
<dbReference type="CCDS" id="CCDS24181.1"/>
<dbReference type="RefSeq" id="NP_001162150.1">
    <property type="nucleotide sequence ID" value="NM_001168679.1"/>
</dbReference>
<dbReference type="RefSeq" id="NP_001162151.1">
    <property type="nucleotide sequence ID" value="NM_001168680.1"/>
</dbReference>
<dbReference type="RefSeq" id="NP_666122.1">
    <property type="nucleotide sequence ID" value="NM_146010.2"/>
</dbReference>
<dbReference type="RefSeq" id="XP_006513605.1">
    <property type="nucleotide sequence ID" value="XM_006513542.2"/>
</dbReference>
<dbReference type="SMR" id="Q8R3G9"/>
<dbReference type="FunCoup" id="Q8R3G9">
    <property type="interactions" value="23"/>
</dbReference>
<dbReference type="IntAct" id="Q8R3G9">
    <property type="interactions" value="1"/>
</dbReference>
<dbReference type="STRING" id="10090.ENSMUSP00000136645"/>
<dbReference type="GlyCosmos" id="Q8R3G9">
    <property type="glycosylation" value="1 site, No reported glycans"/>
</dbReference>
<dbReference type="GlyGen" id="Q8R3G9">
    <property type="glycosylation" value="1 site, 1 N-linked glycan (1 site)"/>
</dbReference>
<dbReference type="iPTMnet" id="Q8R3G9"/>
<dbReference type="MetOSite" id="Q8R3G9"/>
<dbReference type="PhosphoSitePlus" id="Q8R3G9"/>
<dbReference type="SwissPalm" id="Q8R3G9"/>
<dbReference type="jPOST" id="Q8R3G9"/>
<dbReference type="PaxDb" id="10090-ENSMUSP00000049243"/>
<dbReference type="PeptideAtlas" id="Q8R3G9"/>
<dbReference type="ProteomicsDB" id="297726"/>
<dbReference type="Antibodypedia" id="29509">
    <property type="antibodies" value="320 antibodies from 37 providers"/>
</dbReference>
<dbReference type="DNASU" id="216350"/>
<dbReference type="Ensembl" id="ENSMUST00000035563.15">
    <property type="protein sequence ID" value="ENSMUSP00000049243.8"/>
    <property type="gene ID" value="ENSMUSG00000034127.16"/>
</dbReference>
<dbReference type="Ensembl" id="ENSMUST00000080630.11">
    <property type="protein sequence ID" value="ENSMUSP00000079463.4"/>
    <property type="gene ID" value="ENSMUSG00000034127.16"/>
</dbReference>
<dbReference type="Ensembl" id="ENSMUST00000179196.3">
    <property type="protein sequence ID" value="ENSMUSP00000136645.2"/>
    <property type="gene ID" value="ENSMUSG00000034127.16"/>
</dbReference>
<dbReference type="GeneID" id="216350"/>
<dbReference type="KEGG" id="mmu:216350"/>
<dbReference type="UCSC" id="uc007hbm.2">
    <property type="organism name" value="mouse"/>
</dbReference>
<dbReference type="AGR" id="MGI:2384918"/>
<dbReference type="CTD" id="7103"/>
<dbReference type="MGI" id="MGI:2384918">
    <property type="gene designation" value="Tspan8"/>
</dbReference>
<dbReference type="VEuPathDB" id="HostDB:ENSMUSG00000034127"/>
<dbReference type="eggNOG" id="KOG3882">
    <property type="taxonomic scope" value="Eukaryota"/>
</dbReference>
<dbReference type="GeneTree" id="ENSGT00940000158153"/>
<dbReference type="HOGENOM" id="CLU_055524_4_2_1"/>
<dbReference type="InParanoid" id="Q8R3G9"/>
<dbReference type="OMA" id="IAIWIRV"/>
<dbReference type="OrthoDB" id="5982705at2759"/>
<dbReference type="PhylomeDB" id="Q8R3G9"/>
<dbReference type="TreeFam" id="TF352895"/>
<dbReference type="BioGRID-ORCS" id="216350">
    <property type="hits" value="1 hit in 78 CRISPR screens"/>
</dbReference>
<dbReference type="ChiTaRS" id="Tspan8">
    <property type="organism name" value="mouse"/>
</dbReference>
<dbReference type="PRO" id="PR:Q8R3G9"/>
<dbReference type="Proteomes" id="UP000000589">
    <property type="component" value="Chromosome 10"/>
</dbReference>
<dbReference type="RNAct" id="Q8R3G9">
    <property type="molecule type" value="protein"/>
</dbReference>
<dbReference type="Bgee" id="ENSMUSG00000034127">
    <property type="expression patterns" value="Expressed in seminal vesicle and 163 other cell types or tissues"/>
</dbReference>
<dbReference type="ExpressionAtlas" id="Q8R3G9">
    <property type="expression patterns" value="baseline and differential"/>
</dbReference>
<dbReference type="GO" id="GO:0009986">
    <property type="term" value="C:cell surface"/>
    <property type="evidence" value="ECO:0000314"/>
    <property type="project" value="MGI"/>
</dbReference>
<dbReference type="GO" id="GO:0005886">
    <property type="term" value="C:plasma membrane"/>
    <property type="evidence" value="ECO:0007669"/>
    <property type="project" value="UniProtKB-SubCell"/>
</dbReference>
<dbReference type="GO" id="GO:0005178">
    <property type="term" value="F:integrin binding"/>
    <property type="evidence" value="ECO:0007669"/>
    <property type="project" value="Ensembl"/>
</dbReference>
<dbReference type="GO" id="GO:0030195">
    <property type="term" value="P:negative regulation of blood coagulation"/>
    <property type="evidence" value="ECO:0007669"/>
    <property type="project" value="Ensembl"/>
</dbReference>
<dbReference type="GO" id="GO:0010468">
    <property type="term" value="P:regulation of gene expression"/>
    <property type="evidence" value="ECO:0000314"/>
    <property type="project" value="MGI"/>
</dbReference>
<dbReference type="GO" id="GO:0007283">
    <property type="term" value="P:spermatogenesis"/>
    <property type="evidence" value="ECO:0000314"/>
    <property type="project" value="MGI"/>
</dbReference>
<dbReference type="CDD" id="cd03154">
    <property type="entry name" value="TM4SF3_like_LEL"/>
    <property type="match status" value="1"/>
</dbReference>
<dbReference type="FunFam" id="1.10.1450.10:FF:000031">
    <property type="entry name" value="Tetraspanin"/>
    <property type="match status" value="1"/>
</dbReference>
<dbReference type="Gene3D" id="1.10.1450.10">
    <property type="entry name" value="Tetraspanin"/>
    <property type="match status" value="1"/>
</dbReference>
<dbReference type="InterPro" id="IPR018499">
    <property type="entry name" value="Tetraspanin/Peripherin"/>
</dbReference>
<dbReference type="InterPro" id="IPR000301">
    <property type="entry name" value="Tetraspanin_animals"/>
</dbReference>
<dbReference type="InterPro" id="IPR018503">
    <property type="entry name" value="Tetraspanin_CS"/>
</dbReference>
<dbReference type="InterPro" id="IPR008952">
    <property type="entry name" value="Tetraspanin_EC2_sf"/>
</dbReference>
<dbReference type="PANTHER" id="PTHR19282">
    <property type="entry name" value="TETRASPANIN"/>
    <property type="match status" value="1"/>
</dbReference>
<dbReference type="PANTHER" id="PTHR19282:SF380">
    <property type="entry name" value="TETRASPANIN-8"/>
    <property type="match status" value="1"/>
</dbReference>
<dbReference type="Pfam" id="PF00335">
    <property type="entry name" value="Tetraspanin"/>
    <property type="match status" value="1"/>
</dbReference>
<dbReference type="PIRSF" id="PIRSF002419">
    <property type="entry name" value="Tetraspanin"/>
    <property type="match status" value="1"/>
</dbReference>
<dbReference type="PRINTS" id="PR00259">
    <property type="entry name" value="TMFOUR"/>
</dbReference>
<dbReference type="SUPFAM" id="SSF48652">
    <property type="entry name" value="Tetraspanin"/>
    <property type="match status" value="1"/>
</dbReference>
<dbReference type="PROSITE" id="PS00421">
    <property type="entry name" value="TM4_1"/>
    <property type="match status" value="1"/>
</dbReference>
<protein>
    <recommendedName>
        <fullName>Tetraspanin-8</fullName>
        <shortName>Tspan-8</shortName>
    </recommendedName>
</protein>
<proteinExistence type="evidence at protein level"/>